<comment type="function">
    <text evidence="1">Catalyzes the synthesis of GMP from XMP.</text>
</comment>
<comment type="catalytic activity">
    <reaction evidence="1">
        <text>XMP + L-glutamine + ATP + H2O = GMP + L-glutamate + AMP + diphosphate + 2 H(+)</text>
        <dbReference type="Rhea" id="RHEA:11680"/>
        <dbReference type="ChEBI" id="CHEBI:15377"/>
        <dbReference type="ChEBI" id="CHEBI:15378"/>
        <dbReference type="ChEBI" id="CHEBI:29985"/>
        <dbReference type="ChEBI" id="CHEBI:30616"/>
        <dbReference type="ChEBI" id="CHEBI:33019"/>
        <dbReference type="ChEBI" id="CHEBI:57464"/>
        <dbReference type="ChEBI" id="CHEBI:58115"/>
        <dbReference type="ChEBI" id="CHEBI:58359"/>
        <dbReference type="ChEBI" id="CHEBI:456215"/>
        <dbReference type="EC" id="6.3.5.2"/>
    </reaction>
</comment>
<comment type="pathway">
    <text evidence="1">Purine metabolism; GMP biosynthesis; GMP from XMP (L-Gln route): step 1/1.</text>
</comment>
<comment type="subunit">
    <text evidence="1">Homodimer.</text>
</comment>
<sequence>MDQEKVIVIDFGGQYNQLVARRVRECNVYCEIYSYKTDLAQIKAMNPKGIILTGGPNSCYEDGAPTCTKELFELGVPVLGLCYGAQLMQHVLGGKVEKAPVREYGKTETFVDKSSALFSDVSEKTIVWMSHFDYISQIAPGFKIVAHTADCPVAAAECTEKNLYAIQFHPEVLHTQEGTKMLHNFVRGVCGCAGTWKMDAFVENTIKEIREKVGSGKVLLALSGGVDSSVAAGLLSRAIGKQLTCVFVDHGLLRKDEGDEVESVFGPEGQFDLNFIRVNAQERYYSKLAGVTEPEAKRKIIGEEFIRVFEEEAKKIGAVDFLAQGTIYPDVVESGLGGESAVIKSHHNVGGLPDFVDFKEIIEPLRNLFKDEVRKAGLELGIPEHLVFRQPFPGPGLGIRIIGEVTADKVRIVQDADFIYRSEVDKAVAEYKKANGKAPAWMPNQYFAALTNMRSVGVMGDERTYDYAVALRAVNTIDFMTAESAEIPFEVLQTVMSRIINEVRGVNRVFYDLTSKPPGTIEFE</sequence>
<name>GUAA_LACE2</name>
<feature type="chain" id="PRO_1000205302" description="GMP synthase [glutamine-hydrolyzing]">
    <location>
        <begin position="1"/>
        <end position="524"/>
    </location>
</feature>
<feature type="domain" description="Glutamine amidotransferase type-1" evidence="1">
    <location>
        <begin position="5"/>
        <end position="195"/>
    </location>
</feature>
<feature type="domain" description="GMPS ATP-PPase" evidence="1">
    <location>
        <begin position="196"/>
        <end position="389"/>
    </location>
</feature>
<feature type="active site" description="Nucleophile" evidence="1">
    <location>
        <position position="82"/>
    </location>
</feature>
<feature type="active site" evidence="1">
    <location>
        <position position="169"/>
    </location>
</feature>
<feature type="active site" evidence="1">
    <location>
        <position position="171"/>
    </location>
</feature>
<feature type="binding site" evidence="1">
    <location>
        <begin position="223"/>
        <end position="229"/>
    </location>
    <ligand>
        <name>ATP</name>
        <dbReference type="ChEBI" id="CHEBI:30616"/>
    </ligand>
</feature>
<protein>
    <recommendedName>
        <fullName evidence="1">GMP synthase [glutamine-hydrolyzing]</fullName>
        <ecNumber evidence="1">6.3.5.2</ecNumber>
    </recommendedName>
    <alternativeName>
        <fullName evidence="1">GMP synthetase</fullName>
    </alternativeName>
    <alternativeName>
        <fullName evidence="1">Glutamine amidotransferase</fullName>
    </alternativeName>
</protein>
<organism>
    <name type="scientific">Lachnospira eligens (strain ATCC 27750 / DSM 3376 / VPI C15-48 / C15-B4)</name>
    <name type="common">Eubacterium eligens</name>
    <dbReference type="NCBI Taxonomy" id="515620"/>
    <lineage>
        <taxon>Bacteria</taxon>
        <taxon>Bacillati</taxon>
        <taxon>Bacillota</taxon>
        <taxon>Clostridia</taxon>
        <taxon>Lachnospirales</taxon>
        <taxon>Lachnospiraceae</taxon>
        <taxon>Lachnospira</taxon>
    </lineage>
</organism>
<accession>C4Z3X1</accession>
<keyword id="KW-0067">ATP-binding</keyword>
<keyword id="KW-0315">Glutamine amidotransferase</keyword>
<keyword id="KW-0332">GMP biosynthesis</keyword>
<keyword id="KW-0436">Ligase</keyword>
<keyword id="KW-0547">Nucleotide-binding</keyword>
<keyword id="KW-0658">Purine biosynthesis</keyword>
<keyword id="KW-1185">Reference proteome</keyword>
<evidence type="ECO:0000255" key="1">
    <source>
        <dbReference type="HAMAP-Rule" id="MF_00344"/>
    </source>
</evidence>
<reference key="1">
    <citation type="journal article" date="2009" name="Proc. Natl. Acad. Sci. U.S.A.">
        <title>Characterizing a model human gut microbiota composed of members of its two dominant bacterial phyla.</title>
        <authorList>
            <person name="Mahowald M.A."/>
            <person name="Rey F.E."/>
            <person name="Seedorf H."/>
            <person name="Turnbaugh P.J."/>
            <person name="Fulton R.S."/>
            <person name="Wollam A."/>
            <person name="Shah N."/>
            <person name="Wang C."/>
            <person name="Magrini V."/>
            <person name="Wilson R.K."/>
            <person name="Cantarel B.L."/>
            <person name="Coutinho P.M."/>
            <person name="Henrissat B."/>
            <person name="Crock L.W."/>
            <person name="Russell A."/>
            <person name="Verberkmoes N.C."/>
            <person name="Hettich R.L."/>
            <person name="Gordon J.I."/>
        </authorList>
    </citation>
    <scope>NUCLEOTIDE SEQUENCE [LARGE SCALE GENOMIC DNA]</scope>
    <source>
        <strain>ATCC 27750 / DSM 3376 / VPI C15-48 / C15-B4</strain>
    </source>
</reference>
<proteinExistence type="inferred from homology"/>
<gene>
    <name evidence="1" type="primary">guaA</name>
    <name type="ordered locus">EUBELI_01806</name>
</gene>
<dbReference type="EC" id="6.3.5.2" evidence="1"/>
<dbReference type="EMBL" id="CP001104">
    <property type="protein sequence ID" value="ACR72796.1"/>
    <property type="molecule type" value="Genomic_DNA"/>
</dbReference>
<dbReference type="RefSeq" id="WP_012740028.1">
    <property type="nucleotide sequence ID" value="NC_012778.1"/>
</dbReference>
<dbReference type="SMR" id="C4Z3X1"/>
<dbReference type="STRING" id="515620.EUBELI_01806"/>
<dbReference type="GeneID" id="41356458"/>
<dbReference type="KEGG" id="eel:EUBELI_01806"/>
<dbReference type="eggNOG" id="COG0518">
    <property type="taxonomic scope" value="Bacteria"/>
</dbReference>
<dbReference type="eggNOG" id="COG0519">
    <property type="taxonomic scope" value="Bacteria"/>
</dbReference>
<dbReference type="HOGENOM" id="CLU_014340_0_5_9"/>
<dbReference type="UniPathway" id="UPA00189">
    <property type="reaction ID" value="UER00296"/>
</dbReference>
<dbReference type="Proteomes" id="UP000001476">
    <property type="component" value="Chromosome"/>
</dbReference>
<dbReference type="GO" id="GO:0005829">
    <property type="term" value="C:cytosol"/>
    <property type="evidence" value="ECO:0007669"/>
    <property type="project" value="TreeGrafter"/>
</dbReference>
<dbReference type="GO" id="GO:0005524">
    <property type="term" value="F:ATP binding"/>
    <property type="evidence" value="ECO:0007669"/>
    <property type="project" value="UniProtKB-UniRule"/>
</dbReference>
<dbReference type="GO" id="GO:0003921">
    <property type="term" value="F:GMP synthase activity"/>
    <property type="evidence" value="ECO:0007669"/>
    <property type="project" value="InterPro"/>
</dbReference>
<dbReference type="CDD" id="cd01742">
    <property type="entry name" value="GATase1_GMP_Synthase"/>
    <property type="match status" value="1"/>
</dbReference>
<dbReference type="CDD" id="cd01997">
    <property type="entry name" value="GMP_synthase_C"/>
    <property type="match status" value="1"/>
</dbReference>
<dbReference type="FunFam" id="3.30.300.10:FF:000002">
    <property type="entry name" value="GMP synthase [glutamine-hydrolyzing]"/>
    <property type="match status" value="1"/>
</dbReference>
<dbReference type="FunFam" id="3.40.50.620:FF:000001">
    <property type="entry name" value="GMP synthase [glutamine-hydrolyzing]"/>
    <property type="match status" value="1"/>
</dbReference>
<dbReference type="FunFam" id="3.40.50.880:FF:000001">
    <property type="entry name" value="GMP synthase [glutamine-hydrolyzing]"/>
    <property type="match status" value="1"/>
</dbReference>
<dbReference type="Gene3D" id="3.30.300.10">
    <property type="match status" value="1"/>
</dbReference>
<dbReference type="Gene3D" id="3.40.50.880">
    <property type="match status" value="1"/>
</dbReference>
<dbReference type="Gene3D" id="3.40.50.620">
    <property type="entry name" value="HUPs"/>
    <property type="match status" value="1"/>
</dbReference>
<dbReference type="HAMAP" id="MF_00344">
    <property type="entry name" value="GMP_synthase"/>
    <property type="match status" value="1"/>
</dbReference>
<dbReference type="InterPro" id="IPR029062">
    <property type="entry name" value="Class_I_gatase-like"/>
</dbReference>
<dbReference type="InterPro" id="IPR017926">
    <property type="entry name" value="GATASE"/>
</dbReference>
<dbReference type="InterPro" id="IPR001674">
    <property type="entry name" value="GMP_synth_C"/>
</dbReference>
<dbReference type="InterPro" id="IPR004739">
    <property type="entry name" value="GMP_synth_GATase"/>
</dbReference>
<dbReference type="InterPro" id="IPR022955">
    <property type="entry name" value="GMP_synthase"/>
</dbReference>
<dbReference type="InterPro" id="IPR025777">
    <property type="entry name" value="GMPS_ATP_PPase_dom"/>
</dbReference>
<dbReference type="InterPro" id="IPR022310">
    <property type="entry name" value="NAD/GMP_synthase"/>
</dbReference>
<dbReference type="InterPro" id="IPR014729">
    <property type="entry name" value="Rossmann-like_a/b/a_fold"/>
</dbReference>
<dbReference type="NCBIfam" id="TIGR00884">
    <property type="entry name" value="guaA_Cterm"/>
    <property type="match status" value="1"/>
</dbReference>
<dbReference type="NCBIfam" id="TIGR00888">
    <property type="entry name" value="guaA_Nterm"/>
    <property type="match status" value="1"/>
</dbReference>
<dbReference type="NCBIfam" id="NF000848">
    <property type="entry name" value="PRK00074.1"/>
    <property type="match status" value="1"/>
</dbReference>
<dbReference type="PANTHER" id="PTHR11922:SF2">
    <property type="entry name" value="GMP SYNTHASE [GLUTAMINE-HYDROLYZING]"/>
    <property type="match status" value="1"/>
</dbReference>
<dbReference type="PANTHER" id="PTHR11922">
    <property type="entry name" value="GMP SYNTHASE-RELATED"/>
    <property type="match status" value="1"/>
</dbReference>
<dbReference type="Pfam" id="PF00117">
    <property type="entry name" value="GATase"/>
    <property type="match status" value="1"/>
</dbReference>
<dbReference type="Pfam" id="PF00958">
    <property type="entry name" value="GMP_synt_C"/>
    <property type="match status" value="1"/>
</dbReference>
<dbReference type="Pfam" id="PF02540">
    <property type="entry name" value="NAD_synthase"/>
    <property type="match status" value="1"/>
</dbReference>
<dbReference type="PRINTS" id="PR00097">
    <property type="entry name" value="ANTSNTHASEII"/>
</dbReference>
<dbReference type="PRINTS" id="PR00099">
    <property type="entry name" value="CPSGATASE"/>
</dbReference>
<dbReference type="PRINTS" id="PR00096">
    <property type="entry name" value="GATASE"/>
</dbReference>
<dbReference type="SUPFAM" id="SSF52402">
    <property type="entry name" value="Adenine nucleotide alpha hydrolases-like"/>
    <property type="match status" value="1"/>
</dbReference>
<dbReference type="SUPFAM" id="SSF52317">
    <property type="entry name" value="Class I glutamine amidotransferase-like"/>
    <property type="match status" value="1"/>
</dbReference>
<dbReference type="SUPFAM" id="SSF54810">
    <property type="entry name" value="GMP synthetase C-terminal dimerisation domain"/>
    <property type="match status" value="1"/>
</dbReference>
<dbReference type="PROSITE" id="PS51273">
    <property type="entry name" value="GATASE_TYPE_1"/>
    <property type="match status" value="1"/>
</dbReference>
<dbReference type="PROSITE" id="PS51553">
    <property type="entry name" value="GMPS_ATP_PPASE"/>
    <property type="match status" value="1"/>
</dbReference>